<dbReference type="EC" id="1.1.1.86" evidence="1"/>
<dbReference type="EMBL" id="CP000356">
    <property type="protein sequence ID" value="ABF53185.1"/>
    <property type="molecule type" value="Genomic_DNA"/>
</dbReference>
<dbReference type="RefSeq" id="WP_011541765.1">
    <property type="nucleotide sequence ID" value="NC_008048.1"/>
</dbReference>
<dbReference type="SMR" id="Q1GT37"/>
<dbReference type="STRING" id="317655.Sala_1472"/>
<dbReference type="KEGG" id="sal:Sala_1472"/>
<dbReference type="eggNOG" id="COG0059">
    <property type="taxonomic scope" value="Bacteria"/>
</dbReference>
<dbReference type="HOGENOM" id="CLU_033821_0_1_5"/>
<dbReference type="OrthoDB" id="9804088at2"/>
<dbReference type="UniPathway" id="UPA00047">
    <property type="reaction ID" value="UER00056"/>
</dbReference>
<dbReference type="UniPathway" id="UPA00049">
    <property type="reaction ID" value="UER00060"/>
</dbReference>
<dbReference type="Proteomes" id="UP000006578">
    <property type="component" value="Chromosome"/>
</dbReference>
<dbReference type="GO" id="GO:0005829">
    <property type="term" value="C:cytosol"/>
    <property type="evidence" value="ECO:0007669"/>
    <property type="project" value="TreeGrafter"/>
</dbReference>
<dbReference type="GO" id="GO:0004455">
    <property type="term" value="F:ketol-acid reductoisomerase activity"/>
    <property type="evidence" value="ECO:0007669"/>
    <property type="project" value="UniProtKB-UniRule"/>
</dbReference>
<dbReference type="GO" id="GO:0000287">
    <property type="term" value="F:magnesium ion binding"/>
    <property type="evidence" value="ECO:0007669"/>
    <property type="project" value="UniProtKB-UniRule"/>
</dbReference>
<dbReference type="GO" id="GO:0050661">
    <property type="term" value="F:NADP binding"/>
    <property type="evidence" value="ECO:0007669"/>
    <property type="project" value="InterPro"/>
</dbReference>
<dbReference type="GO" id="GO:0009097">
    <property type="term" value="P:isoleucine biosynthetic process"/>
    <property type="evidence" value="ECO:0007669"/>
    <property type="project" value="UniProtKB-UniRule"/>
</dbReference>
<dbReference type="GO" id="GO:0009099">
    <property type="term" value="P:L-valine biosynthetic process"/>
    <property type="evidence" value="ECO:0007669"/>
    <property type="project" value="UniProtKB-UniRule"/>
</dbReference>
<dbReference type="FunFam" id="3.40.50.720:FF:000023">
    <property type="entry name" value="Ketol-acid reductoisomerase (NADP(+))"/>
    <property type="match status" value="1"/>
</dbReference>
<dbReference type="Gene3D" id="6.10.240.10">
    <property type="match status" value="1"/>
</dbReference>
<dbReference type="Gene3D" id="3.40.50.720">
    <property type="entry name" value="NAD(P)-binding Rossmann-like Domain"/>
    <property type="match status" value="1"/>
</dbReference>
<dbReference type="HAMAP" id="MF_00435">
    <property type="entry name" value="IlvC"/>
    <property type="match status" value="1"/>
</dbReference>
<dbReference type="InterPro" id="IPR008927">
    <property type="entry name" value="6-PGluconate_DH-like_C_sf"/>
</dbReference>
<dbReference type="InterPro" id="IPR013023">
    <property type="entry name" value="KARI"/>
</dbReference>
<dbReference type="InterPro" id="IPR000506">
    <property type="entry name" value="KARI_C"/>
</dbReference>
<dbReference type="InterPro" id="IPR013116">
    <property type="entry name" value="KARI_N"/>
</dbReference>
<dbReference type="InterPro" id="IPR014359">
    <property type="entry name" value="KARI_prok"/>
</dbReference>
<dbReference type="InterPro" id="IPR036291">
    <property type="entry name" value="NAD(P)-bd_dom_sf"/>
</dbReference>
<dbReference type="NCBIfam" id="TIGR00465">
    <property type="entry name" value="ilvC"/>
    <property type="match status" value="1"/>
</dbReference>
<dbReference type="NCBIfam" id="NF004017">
    <property type="entry name" value="PRK05479.1"/>
    <property type="match status" value="1"/>
</dbReference>
<dbReference type="NCBIfam" id="NF009940">
    <property type="entry name" value="PRK13403.1"/>
    <property type="match status" value="1"/>
</dbReference>
<dbReference type="PANTHER" id="PTHR21371">
    <property type="entry name" value="KETOL-ACID REDUCTOISOMERASE, MITOCHONDRIAL"/>
    <property type="match status" value="1"/>
</dbReference>
<dbReference type="PANTHER" id="PTHR21371:SF1">
    <property type="entry name" value="KETOL-ACID REDUCTOISOMERASE, MITOCHONDRIAL"/>
    <property type="match status" value="1"/>
</dbReference>
<dbReference type="Pfam" id="PF01450">
    <property type="entry name" value="KARI_C"/>
    <property type="match status" value="1"/>
</dbReference>
<dbReference type="Pfam" id="PF07991">
    <property type="entry name" value="KARI_N"/>
    <property type="match status" value="1"/>
</dbReference>
<dbReference type="PIRSF" id="PIRSF000116">
    <property type="entry name" value="IlvC_gammaproteo"/>
    <property type="match status" value="1"/>
</dbReference>
<dbReference type="SUPFAM" id="SSF48179">
    <property type="entry name" value="6-phosphogluconate dehydrogenase C-terminal domain-like"/>
    <property type="match status" value="1"/>
</dbReference>
<dbReference type="SUPFAM" id="SSF51735">
    <property type="entry name" value="NAD(P)-binding Rossmann-fold domains"/>
    <property type="match status" value="1"/>
</dbReference>
<dbReference type="PROSITE" id="PS51851">
    <property type="entry name" value="KARI_C"/>
    <property type="match status" value="1"/>
</dbReference>
<dbReference type="PROSITE" id="PS51850">
    <property type="entry name" value="KARI_N"/>
    <property type="match status" value="1"/>
</dbReference>
<feature type="chain" id="PRO_0000252789" description="Ketol-acid reductoisomerase (NADP(+))">
    <location>
        <begin position="1"/>
        <end position="346"/>
    </location>
</feature>
<feature type="domain" description="KARI N-terminal Rossmann" evidence="2">
    <location>
        <begin position="1"/>
        <end position="189"/>
    </location>
</feature>
<feature type="domain" description="KARI C-terminal knotted" evidence="3">
    <location>
        <begin position="190"/>
        <end position="335"/>
    </location>
</feature>
<feature type="active site" evidence="1">
    <location>
        <position position="108"/>
    </location>
</feature>
<feature type="binding site" evidence="1">
    <location>
        <begin position="24"/>
        <end position="27"/>
    </location>
    <ligand>
        <name>NADP(+)</name>
        <dbReference type="ChEBI" id="CHEBI:58349"/>
    </ligand>
</feature>
<feature type="binding site" evidence="1">
    <location>
        <position position="48"/>
    </location>
    <ligand>
        <name>NADP(+)</name>
        <dbReference type="ChEBI" id="CHEBI:58349"/>
    </ligand>
</feature>
<feature type="binding site" evidence="1">
    <location>
        <position position="51"/>
    </location>
    <ligand>
        <name>NADP(+)</name>
        <dbReference type="ChEBI" id="CHEBI:58349"/>
    </ligand>
</feature>
<feature type="binding site" evidence="1">
    <location>
        <position position="53"/>
    </location>
    <ligand>
        <name>NADP(+)</name>
        <dbReference type="ChEBI" id="CHEBI:58349"/>
    </ligand>
</feature>
<feature type="binding site" evidence="1">
    <location>
        <begin position="83"/>
        <end position="86"/>
    </location>
    <ligand>
        <name>NADP(+)</name>
        <dbReference type="ChEBI" id="CHEBI:58349"/>
    </ligand>
</feature>
<feature type="binding site" evidence="1">
    <location>
        <position position="134"/>
    </location>
    <ligand>
        <name>NADP(+)</name>
        <dbReference type="ChEBI" id="CHEBI:58349"/>
    </ligand>
</feature>
<feature type="binding site" evidence="1">
    <location>
        <position position="198"/>
    </location>
    <ligand>
        <name>Mg(2+)</name>
        <dbReference type="ChEBI" id="CHEBI:18420"/>
        <label>1</label>
    </ligand>
</feature>
<feature type="binding site" evidence="1">
    <location>
        <position position="198"/>
    </location>
    <ligand>
        <name>Mg(2+)</name>
        <dbReference type="ChEBI" id="CHEBI:18420"/>
        <label>2</label>
    </ligand>
</feature>
<feature type="binding site" evidence="1">
    <location>
        <position position="202"/>
    </location>
    <ligand>
        <name>Mg(2+)</name>
        <dbReference type="ChEBI" id="CHEBI:18420"/>
        <label>1</label>
    </ligand>
</feature>
<feature type="binding site" evidence="1">
    <location>
        <position position="234"/>
    </location>
    <ligand>
        <name>Mg(2+)</name>
        <dbReference type="ChEBI" id="CHEBI:18420"/>
        <label>2</label>
    </ligand>
</feature>
<feature type="binding site" evidence="1">
    <location>
        <position position="238"/>
    </location>
    <ligand>
        <name>Mg(2+)</name>
        <dbReference type="ChEBI" id="CHEBI:18420"/>
        <label>2</label>
    </ligand>
</feature>
<feature type="binding site" evidence="1">
    <location>
        <position position="259"/>
    </location>
    <ligand>
        <name>substrate</name>
    </ligand>
</feature>
<evidence type="ECO:0000255" key="1">
    <source>
        <dbReference type="HAMAP-Rule" id="MF_00435"/>
    </source>
</evidence>
<evidence type="ECO:0000255" key="2">
    <source>
        <dbReference type="PROSITE-ProRule" id="PRU01197"/>
    </source>
</evidence>
<evidence type="ECO:0000255" key="3">
    <source>
        <dbReference type="PROSITE-ProRule" id="PRU01198"/>
    </source>
</evidence>
<name>ILVC_SPHAL</name>
<sequence>MQVYYDRDADQDLIKGKKVAVVGYGSQGHAHAQNMRDSGVKEVAIALRPGSPTAKKAEAAGFKVMSNKEAAAWADVIMIAAPDEHQAKIYAEDIGPNMKPGAALAFAHGLNIHFGLIEARPDIDVFMVAPKGPGHTVRSEYQKGGGVPCLIAVAQEAQGSAAAGNGYAKALALSYASAVGGGRSGIIETTFKEECETDLFGEQAVLCGGITHLIQAGFETLVEAGYAPEMAYFECLHETKLIVDLLYEGGIANMRYSISNTAEYGDIKTGPRIITEETKKEMKRVLADIQSGRFVKDFVLDNQAGQPELKASRKAAAAHPIEQTGEKLRAMMPWIAKNKLVDKAKN</sequence>
<protein>
    <recommendedName>
        <fullName evidence="1">Ketol-acid reductoisomerase (NADP(+))</fullName>
        <shortName evidence="1">KARI</shortName>
        <ecNumber evidence="1">1.1.1.86</ecNumber>
    </recommendedName>
    <alternativeName>
        <fullName evidence="1">Acetohydroxy-acid isomeroreductase</fullName>
        <shortName evidence="1">AHIR</shortName>
    </alternativeName>
    <alternativeName>
        <fullName evidence="1">Alpha-keto-beta-hydroxylacyl reductoisomerase</fullName>
    </alternativeName>
    <alternativeName>
        <fullName evidence="1">Ketol-acid reductoisomerase type 1</fullName>
    </alternativeName>
    <alternativeName>
        <fullName evidence="1">Ketol-acid reductoisomerase type I</fullName>
    </alternativeName>
</protein>
<reference key="1">
    <citation type="journal article" date="2009" name="Proc. Natl. Acad. Sci. U.S.A.">
        <title>The genomic basis of trophic strategy in marine bacteria.</title>
        <authorList>
            <person name="Lauro F.M."/>
            <person name="McDougald D."/>
            <person name="Thomas T."/>
            <person name="Williams T.J."/>
            <person name="Egan S."/>
            <person name="Rice S."/>
            <person name="DeMaere M.Z."/>
            <person name="Ting L."/>
            <person name="Ertan H."/>
            <person name="Johnson J."/>
            <person name="Ferriera S."/>
            <person name="Lapidus A."/>
            <person name="Anderson I."/>
            <person name="Kyrpides N."/>
            <person name="Munk A.C."/>
            <person name="Detter C."/>
            <person name="Han C.S."/>
            <person name="Brown M.V."/>
            <person name="Robb F.T."/>
            <person name="Kjelleberg S."/>
            <person name="Cavicchioli R."/>
        </authorList>
    </citation>
    <scope>NUCLEOTIDE SEQUENCE [LARGE SCALE GENOMIC DNA]</scope>
    <source>
        <strain>DSM 13593 / LMG 18877 / RB2256</strain>
    </source>
</reference>
<keyword id="KW-0028">Amino-acid biosynthesis</keyword>
<keyword id="KW-0100">Branched-chain amino acid biosynthesis</keyword>
<keyword id="KW-0460">Magnesium</keyword>
<keyword id="KW-0479">Metal-binding</keyword>
<keyword id="KW-0521">NADP</keyword>
<keyword id="KW-0560">Oxidoreductase</keyword>
<keyword id="KW-1185">Reference proteome</keyword>
<comment type="function">
    <text evidence="1">Involved in the biosynthesis of branched-chain amino acids (BCAA). Catalyzes an alkyl-migration followed by a ketol-acid reduction of (S)-2-acetolactate (S2AL) to yield (R)-2,3-dihydroxy-isovalerate. In the isomerase reaction, S2AL is rearranged via a Mg-dependent methyl migration to produce 3-hydroxy-3-methyl-2-ketobutyrate (HMKB). In the reductase reaction, this 2-ketoacid undergoes a metal-dependent reduction by NADPH to yield (R)-2,3-dihydroxy-isovalerate.</text>
</comment>
<comment type="catalytic activity">
    <reaction evidence="1">
        <text>(2R)-2,3-dihydroxy-3-methylbutanoate + NADP(+) = (2S)-2-acetolactate + NADPH + H(+)</text>
        <dbReference type="Rhea" id="RHEA:22068"/>
        <dbReference type="ChEBI" id="CHEBI:15378"/>
        <dbReference type="ChEBI" id="CHEBI:49072"/>
        <dbReference type="ChEBI" id="CHEBI:57783"/>
        <dbReference type="ChEBI" id="CHEBI:58349"/>
        <dbReference type="ChEBI" id="CHEBI:58476"/>
        <dbReference type="EC" id="1.1.1.86"/>
    </reaction>
</comment>
<comment type="catalytic activity">
    <reaction evidence="1">
        <text>(2R,3R)-2,3-dihydroxy-3-methylpentanoate + NADP(+) = (S)-2-ethyl-2-hydroxy-3-oxobutanoate + NADPH + H(+)</text>
        <dbReference type="Rhea" id="RHEA:13493"/>
        <dbReference type="ChEBI" id="CHEBI:15378"/>
        <dbReference type="ChEBI" id="CHEBI:49256"/>
        <dbReference type="ChEBI" id="CHEBI:49258"/>
        <dbReference type="ChEBI" id="CHEBI:57783"/>
        <dbReference type="ChEBI" id="CHEBI:58349"/>
        <dbReference type="EC" id="1.1.1.86"/>
    </reaction>
</comment>
<comment type="cofactor">
    <cofactor evidence="1">
        <name>Mg(2+)</name>
        <dbReference type="ChEBI" id="CHEBI:18420"/>
    </cofactor>
    <text evidence="1">Binds 2 magnesium ions per subunit.</text>
</comment>
<comment type="pathway">
    <text evidence="1">Amino-acid biosynthesis; L-isoleucine biosynthesis; L-isoleucine from 2-oxobutanoate: step 2/4.</text>
</comment>
<comment type="pathway">
    <text evidence="1">Amino-acid biosynthesis; L-valine biosynthesis; L-valine from pyruvate: step 2/4.</text>
</comment>
<comment type="similarity">
    <text evidence="1">Belongs to the ketol-acid reductoisomerase family.</text>
</comment>
<proteinExistence type="inferred from homology"/>
<accession>Q1GT37</accession>
<organism>
    <name type="scientific">Sphingopyxis alaskensis (strain DSM 13593 / LMG 18877 / RB2256)</name>
    <name type="common">Sphingomonas alaskensis</name>
    <dbReference type="NCBI Taxonomy" id="317655"/>
    <lineage>
        <taxon>Bacteria</taxon>
        <taxon>Pseudomonadati</taxon>
        <taxon>Pseudomonadota</taxon>
        <taxon>Alphaproteobacteria</taxon>
        <taxon>Sphingomonadales</taxon>
        <taxon>Sphingomonadaceae</taxon>
        <taxon>Sphingopyxis</taxon>
    </lineage>
</organism>
<gene>
    <name evidence="1" type="primary">ilvC</name>
    <name type="ordered locus">Sala_1472</name>
</gene>